<accession>Q6RZZ9</accession>
<accession>Q54J21</accession>
<protein>
    <recommendedName>
        <fullName>Kinesin-related protein 13</fullName>
    </recommendedName>
    <alternativeName>
        <fullName>Kinesin family member 13</fullName>
    </alternativeName>
    <alternativeName>
        <fullName>Kinesin-5</fullName>
    </alternativeName>
</protein>
<sequence length="1265" mass="142748">MITGLSIHNQINKKNEPVKKEQNIQAFVRVRPFSVYELNQGVTTVPIRVSDSSKEVLCEYKGTTRQYKFDHVFDQDSIQSEVFNIAVKPICDEVLLGFNGTIFVYGQTGTGKTHTMEGKHGSNEDMGIIPRTINYLFQCLEQSGADYNIRASHLEIYKEEIFDLLACNGNENLNKPLGMFDTQKGFKIPELEEIVVNDRQSILNVLAKSCKRRQTAETQYNKQSSRSHCIFSITVHVKETSVGGEDLIKIGKLNLVDLAGSENAEKSGNNDRLREAALINKSLLTLGKVITDLTNNEKHIPYRSSQLTKILQDSLGGKTKTSIIATVSPSLVNLEETINTLEYALKAKNIKNTPQINQRMSKNSLLKEQSSEIAHLKQLLQAAYDKNGVYLTIDVYEQMKRELEEKCSQQSITEHKMEAQRHEISSMRKSFDEQTMLFEEAMNELESSKKQQQEKQKFIDQFISQDTMLRSNLGSAVQDLSKLHEKLDTMKSTERENQKSIIDSKSILSKRLTDLNQMLVSKLQMGQNELLESLSVQLKVVHDQQTKSNQLIGKRINNLSQLIDSSVLQIQQLNNDDKQQTQPLLKLNKESNDLFMKLDKTIQQLSDQIKIILSDFSLPFFNSNNNNSNNGDEIIDDSLINNCFKLINDHVNKSDLIVSQQNKLIQEFSESMSQWMLHQSQYIIEQRDYQKQLKEKQILNNTQWEKKLLSKLGQVIQQFSKNFTDSTSVYYDTMDNNLQHFEKQFNSINNHSRQQVESLSNNLQQSSTLSHQFESTVKSVLNDHHANNKKVDPKLIESIEKAKKRINQLTDGCIDLSQRQRQCTNQFNEAFTDFTFGIQSQKDILDRVIIEKNQVHEILPLIEKSKSTFKENIDTLIHSLDSRKSIIQSSTNECSNQLNSLISSIPSYLDSAIKVTSKSGETPSKKHFDIPSPISTSSSSSSSSSISSIHSNAGGKENNHQSINNSIKSNNFDGSKSINCDNMKIDTPQKSSTIPITPKSLKLNLNSTPKSVSKNLKSSQQQQPLIVPSSNQLTLSAKKLSNKEYQRLQQQQQQQQQEQQQQQSAKKKKLAIEKQLMITTSPTLSLVNESPFSSPKLSKQKILQDQIQPPQPPSILSQLNSTPISFLQPQQPQQQPPSFFNNLNGSFNRGNNSIDFSLLDDDSDSDNSDDDVRSLLSSNKKSSRASKNAVVSKKVGLTPSRKLKGVNSSANQSLNVKKSKPILTSLSKKQNISTPIIHSSKPSIFGGGSTISSKLKSLKQQTPLK</sequence>
<feature type="chain" id="PRO_0000365588" description="Kinesin-related protein 13">
    <location>
        <begin position="1"/>
        <end position="1265"/>
    </location>
</feature>
<feature type="domain" description="Kinesin motor" evidence="3">
    <location>
        <begin position="23"/>
        <end position="350"/>
    </location>
</feature>
<feature type="region of interest" description="Disordered" evidence="4">
    <location>
        <begin position="918"/>
        <end position="1026"/>
    </location>
</feature>
<feature type="region of interest" description="Disordered" evidence="4">
    <location>
        <begin position="1085"/>
        <end position="1119"/>
    </location>
</feature>
<feature type="region of interest" description="Disordered" evidence="4">
    <location>
        <begin position="1127"/>
        <end position="1146"/>
    </location>
</feature>
<feature type="region of interest" description="Disordered" evidence="4">
    <location>
        <begin position="1158"/>
        <end position="1214"/>
    </location>
</feature>
<feature type="region of interest" description="Disordered" evidence="4">
    <location>
        <begin position="1245"/>
        <end position="1265"/>
    </location>
</feature>
<feature type="coiled-coil region" evidence="2">
    <location>
        <begin position="331"/>
        <end position="459"/>
    </location>
</feature>
<feature type="compositionally biased region" description="Low complexity" evidence="4">
    <location>
        <begin position="930"/>
        <end position="951"/>
    </location>
</feature>
<feature type="compositionally biased region" description="Polar residues" evidence="4">
    <location>
        <begin position="960"/>
        <end position="980"/>
    </location>
</feature>
<feature type="compositionally biased region" description="Polar residues" evidence="4">
    <location>
        <begin position="1003"/>
        <end position="1026"/>
    </location>
</feature>
<feature type="compositionally biased region" description="Polar residues" evidence="4">
    <location>
        <begin position="1085"/>
        <end position="1097"/>
    </location>
</feature>
<feature type="compositionally biased region" description="Low complexity" evidence="4">
    <location>
        <begin position="1100"/>
        <end position="1119"/>
    </location>
</feature>
<feature type="compositionally biased region" description="Low complexity" evidence="4">
    <location>
        <begin position="1128"/>
        <end position="1146"/>
    </location>
</feature>
<feature type="compositionally biased region" description="Acidic residues" evidence="4">
    <location>
        <begin position="1158"/>
        <end position="1169"/>
    </location>
</feature>
<feature type="compositionally biased region" description="Low complexity" evidence="4">
    <location>
        <begin position="1174"/>
        <end position="1195"/>
    </location>
</feature>
<feature type="compositionally biased region" description="Polar residues" evidence="4">
    <location>
        <begin position="1250"/>
        <end position="1265"/>
    </location>
</feature>
<feature type="binding site" evidence="3">
    <location>
        <begin position="106"/>
        <end position="113"/>
    </location>
    <ligand>
        <name>ATP</name>
        <dbReference type="ChEBI" id="CHEBI:30616"/>
    </ligand>
</feature>
<reference key="1">
    <citation type="journal article" date="2003" name="BMC Genomics">
        <title>Identification and phylogenetic analysis of Dictyostelium discoideum kinesin proteins.</title>
        <authorList>
            <person name="Kollmar M."/>
            <person name="Gloeckner G."/>
        </authorList>
    </citation>
    <scope>NUCLEOTIDE SEQUENCE [GENOMIC DNA]</scope>
    <scope>IDENTIFICATION</scope>
    <scope>NOMENCLATURE</scope>
    <source>
        <strain>AX4</strain>
    </source>
</reference>
<reference key="2">
    <citation type="journal article" date="2005" name="Nature">
        <title>The genome of the social amoeba Dictyostelium discoideum.</title>
        <authorList>
            <person name="Eichinger L."/>
            <person name="Pachebat J.A."/>
            <person name="Gloeckner G."/>
            <person name="Rajandream M.A."/>
            <person name="Sucgang R."/>
            <person name="Berriman M."/>
            <person name="Song J."/>
            <person name="Olsen R."/>
            <person name="Szafranski K."/>
            <person name="Xu Q."/>
            <person name="Tunggal B."/>
            <person name="Kummerfeld S."/>
            <person name="Madera M."/>
            <person name="Konfortov B.A."/>
            <person name="Rivero F."/>
            <person name="Bankier A.T."/>
            <person name="Lehmann R."/>
            <person name="Hamlin N."/>
            <person name="Davies R."/>
            <person name="Gaudet P."/>
            <person name="Fey P."/>
            <person name="Pilcher K."/>
            <person name="Chen G."/>
            <person name="Saunders D."/>
            <person name="Sodergren E.J."/>
            <person name="Davis P."/>
            <person name="Kerhornou A."/>
            <person name="Nie X."/>
            <person name="Hall N."/>
            <person name="Anjard C."/>
            <person name="Hemphill L."/>
            <person name="Bason N."/>
            <person name="Farbrother P."/>
            <person name="Desany B."/>
            <person name="Just E."/>
            <person name="Morio T."/>
            <person name="Rost R."/>
            <person name="Churcher C.M."/>
            <person name="Cooper J."/>
            <person name="Haydock S."/>
            <person name="van Driessche N."/>
            <person name="Cronin A."/>
            <person name="Goodhead I."/>
            <person name="Muzny D.M."/>
            <person name="Mourier T."/>
            <person name="Pain A."/>
            <person name="Lu M."/>
            <person name="Harper D."/>
            <person name="Lindsay R."/>
            <person name="Hauser H."/>
            <person name="James K.D."/>
            <person name="Quiles M."/>
            <person name="Madan Babu M."/>
            <person name="Saito T."/>
            <person name="Buchrieser C."/>
            <person name="Wardroper A."/>
            <person name="Felder M."/>
            <person name="Thangavelu M."/>
            <person name="Johnson D."/>
            <person name="Knights A."/>
            <person name="Loulseged H."/>
            <person name="Mungall K.L."/>
            <person name="Oliver K."/>
            <person name="Price C."/>
            <person name="Quail M.A."/>
            <person name="Urushihara H."/>
            <person name="Hernandez J."/>
            <person name="Rabbinowitsch E."/>
            <person name="Steffen D."/>
            <person name="Sanders M."/>
            <person name="Ma J."/>
            <person name="Kohara Y."/>
            <person name="Sharp S."/>
            <person name="Simmonds M.N."/>
            <person name="Spiegler S."/>
            <person name="Tivey A."/>
            <person name="Sugano S."/>
            <person name="White B."/>
            <person name="Walker D."/>
            <person name="Woodward J.R."/>
            <person name="Winckler T."/>
            <person name="Tanaka Y."/>
            <person name="Shaulsky G."/>
            <person name="Schleicher M."/>
            <person name="Weinstock G.M."/>
            <person name="Rosenthal A."/>
            <person name="Cox E.C."/>
            <person name="Chisholm R.L."/>
            <person name="Gibbs R.A."/>
            <person name="Loomis W.F."/>
            <person name="Platzer M."/>
            <person name="Kay R.R."/>
            <person name="Williams J.G."/>
            <person name="Dear P.H."/>
            <person name="Noegel A.A."/>
            <person name="Barrell B.G."/>
            <person name="Kuspa A."/>
        </authorList>
    </citation>
    <scope>NUCLEOTIDE SEQUENCE [LARGE SCALE GENOMIC DNA]</scope>
    <source>
        <strain>AX4</strain>
    </source>
</reference>
<reference key="3">
    <citation type="journal article" date="2006" name="J. Proteome Res.">
        <title>Identification of novel centrosomal proteins in Dictyostelium discoideum by comparative proteomic approaches.</title>
        <authorList>
            <person name="Reinders Y."/>
            <person name="Schulz I."/>
            <person name="Graef R."/>
            <person name="Sickmann A."/>
        </authorList>
    </citation>
    <scope>IDENTIFICATION BY MASS SPECTROMETRY [LARGE SCALE ANALYSIS]</scope>
</reference>
<reference key="4">
    <citation type="journal article" date="2008" name="Cell Motil. Cytoskeleton">
        <title>Kinesin-5 is not essential for mitotic spindle elongation in Dictyostelium.</title>
        <authorList>
            <person name="Tikhonenko I."/>
            <person name="Nag D.K."/>
            <person name="Martin N."/>
            <person name="Koonce M.P."/>
        </authorList>
    </citation>
    <scope>FUNCTION</scope>
</reference>
<keyword id="KW-0067">ATP-binding</keyword>
<keyword id="KW-0131">Cell cycle</keyword>
<keyword id="KW-0132">Cell division</keyword>
<keyword id="KW-0175">Coiled coil</keyword>
<keyword id="KW-0963">Cytoplasm</keyword>
<keyword id="KW-0206">Cytoskeleton</keyword>
<keyword id="KW-0493">Microtubule</keyword>
<keyword id="KW-0498">Mitosis</keyword>
<keyword id="KW-0505">Motor protein</keyword>
<keyword id="KW-0547">Nucleotide-binding</keyword>
<keyword id="KW-1185">Reference proteome</keyword>
<keyword id="KW-0813">Transport</keyword>
<dbReference type="EMBL" id="AY484466">
    <property type="protein sequence ID" value="AAR39442.1"/>
    <property type="molecule type" value="Genomic_DNA"/>
</dbReference>
<dbReference type="EMBL" id="AAFI02000111">
    <property type="protein sequence ID" value="EAL63277.1"/>
    <property type="molecule type" value="Genomic_DNA"/>
</dbReference>
<dbReference type="RefSeq" id="XP_636780.1">
    <property type="nucleotide sequence ID" value="XM_631688.1"/>
</dbReference>
<dbReference type="SMR" id="Q6RZZ9"/>
<dbReference type="FunCoup" id="Q6RZZ9">
    <property type="interactions" value="5"/>
</dbReference>
<dbReference type="IntAct" id="Q6RZZ9">
    <property type="interactions" value="1"/>
</dbReference>
<dbReference type="STRING" id="44689.Q6RZZ9"/>
<dbReference type="PaxDb" id="44689-DDB0201557"/>
<dbReference type="EnsemblProtists" id="EAL63277">
    <property type="protein sequence ID" value="EAL63277"/>
    <property type="gene ID" value="DDB_G0288361"/>
</dbReference>
<dbReference type="GeneID" id="8626583"/>
<dbReference type="KEGG" id="ddi:DDB_G0288361"/>
<dbReference type="dictyBase" id="DDB_G0288361">
    <property type="gene designation" value="kif13"/>
</dbReference>
<dbReference type="VEuPathDB" id="AmoebaDB:DDB_G0288361"/>
<dbReference type="eggNOG" id="KOG0243">
    <property type="taxonomic scope" value="Eukaryota"/>
</dbReference>
<dbReference type="HOGENOM" id="CLU_264479_0_0_1"/>
<dbReference type="InParanoid" id="Q6RZZ9"/>
<dbReference type="OMA" id="RHEISSM"/>
<dbReference type="PhylomeDB" id="Q6RZZ9"/>
<dbReference type="Reactome" id="R-DDI-983189">
    <property type="pathway name" value="Kinesins"/>
</dbReference>
<dbReference type="PRO" id="PR:Q6RZZ9"/>
<dbReference type="Proteomes" id="UP000002195">
    <property type="component" value="Chromosome 5"/>
</dbReference>
<dbReference type="GO" id="GO:0005737">
    <property type="term" value="C:cytoplasm"/>
    <property type="evidence" value="ECO:0007669"/>
    <property type="project" value="UniProtKB-KW"/>
</dbReference>
<dbReference type="GO" id="GO:0072686">
    <property type="term" value="C:mitotic spindle"/>
    <property type="evidence" value="ECO:0000318"/>
    <property type="project" value="GO_Central"/>
</dbReference>
<dbReference type="GO" id="GO:0005634">
    <property type="term" value="C:nucleus"/>
    <property type="evidence" value="ECO:0000318"/>
    <property type="project" value="GO_Central"/>
</dbReference>
<dbReference type="GO" id="GO:0005876">
    <property type="term" value="C:spindle microtubule"/>
    <property type="evidence" value="ECO:0000318"/>
    <property type="project" value="GO_Central"/>
</dbReference>
<dbReference type="GO" id="GO:0005524">
    <property type="term" value="F:ATP binding"/>
    <property type="evidence" value="ECO:0007669"/>
    <property type="project" value="UniProtKB-KW"/>
</dbReference>
<dbReference type="GO" id="GO:0008017">
    <property type="term" value="F:microtubule binding"/>
    <property type="evidence" value="ECO:0007669"/>
    <property type="project" value="InterPro"/>
</dbReference>
<dbReference type="GO" id="GO:0008574">
    <property type="term" value="F:plus-end-directed microtubule motor activity"/>
    <property type="evidence" value="ECO:0000318"/>
    <property type="project" value="GO_Central"/>
</dbReference>
<dbReference type="GO" id="GO:0051301">
    <property type="term" value="P:cell division"/>
    <property type="evidence" value="ECO:0007669"/>
    <property type="project" value="UniProtKB-KW"/>
</dbReference>
<dbReference type="GO" id="GO:0007018">
    <property type="term" value="P:microtubule-based movement"/>
    <property type="evidence" value="ECO:0007669"/>
    <property type="project" value="InterPro"/>
</dbReference>
<dbReference type="GO" id="GO:0090307">
    <property type="term" value="P:mitotic spindle assembly"/>
    <property type="evidence" value="ECO:0000318"/>
    <property type="project" value="GO_Central"/>
</dbReference>
<dbReference type="GO" id="GO:0051231">
    <property type="term" value="P:spindle elongation"/>
    <property type="evidence" value="ECO:0000315"/>
    <property type="project" value="dictyBase"/>
</dbReference>
<dbReference type="GO" id="GO:0007051">
    <property type="term" value="P:spindle organization"/>
    <property type="evidence" value="ECO:0000315"/>
    <property type="project" value="dictyBase"/>
</dbReference>
<dbReference type="CDD" id="cd01364">
    <property type="entry name" value="KISc_BimC_Eg5"/>
    <property type="match status" value="1"/>
</dbReference>
<dbReference type="FunFam" id="3.40.850.10:FF:000019">
    <property type="entry name" value="Kinesin-like protein KIN-5D"/>
    <property type="match status" value="1"/>
</dbReference>
<dbReference type="Gene3D" id="3.40.850.10">
    <property type="entry name" value="Kinesin motor domain"/>
    <property type="match status" value="1"/>
</dbReference>
<dbReference type="InterPro" id="IPR047149">
    <property type="entry name" value="KIF11-like"/>
</dbReference>
<dbReference type="InterPro" id="IPR047241">
    <property type="entry name" value="KIF11-like_kin_motor_dom"/>
</dbReference>
<dbReference type="InterPro" id="IPR019821">
    <property type="entry name" value="Kinesin_motor_CS"/>
</dbReference>
<dbReference type="InterPro" id="IPR001752">
    <property type="entry name" value="Kinesin_motor_dom"/>
</dbReference>
<dbReference type="InterPro" id="IPR036961">
    <property type="entry name" value="Kinesin_motor_dom_sf"/>
</dbReference>
<dbReference type="InterPro" id="IPR027417">
    <property type="entry name" value="P-loop_NTPase"/>
</dbReference>
<dbReference type="PANTHER" id="PTHR47970:SF12">
    <property type="entry name" value="KINESIN FAMILY MEMBER 11"/>
    <property type="match status" value="1"/>
</dbReference>
<dbReference type="PANTHER" id="PTHR47970">
    <property type="entry name" value="KINESIN-LIKE PROTEIN KIF11"/>
    <property type="match status" value="1"/>
</dbReference>
<dbReference type="Pfam" id="PF00225">
    <property type="entry name" value="Kinesin"/>
    <property type="match status" value="1"/>
</dbReference>
<dbReference type="PRINTS" id="PR00380">
    <property type="entry name" value="KINESINHEAVY"/>
</dbReference>
<dbReference type="SMART" id="SM00129">
    <property type="entry name" value="KISc"/>
    <property type="match status" value="1"/>
</dbReference>
<dbReference type="SUPFAM" id="SSF52540">
    <property type="entry name" value="P-loop containing nucleoside triphosphate hydrolases"/>
    <property type="match status" value="1"/>
</dbReference>
<dbReference type="PROSITE" id="PS00411">
    <property type="entry name" value="KINESIN_MOTOR_1"/>
    <property type="match status" value="1"/>
</dbReference>
<dbReference type="PROSITE" id="PS50067">
    <property type="entry name" value="KINESIN_MOTOR_2"/>
    <property type="match status" value="1"/>
</dbReference>
<comment type="function">
    <text evidence="1 5">Microtubule-associated force-producing protein that plays a role in organelle transport. Its motor activity is directed toward the microtubule's plus end (By similarity). Cooperates with dynein to control the spindle elongation rate, but is dispensable for mitosis.</text>
</comment>
<comment type="subcellular location">
    <subcellularLocation>
        <location evidence="1">Cytoplasm</location>
        <location evidence="1">Cytoskeleton</location>
    </subcellularLocation>
</comment>
<comment type="similarity">
    <text evidence="3">Belongs to the TRAFAC class myosin-kinesin ATPase superfamily. Kinesin family. BimC subfamily.</text>
</comment>
<gene>
    <name type="primary">kif13</name>
    <name type="ORF">DDB_G0288361</name>
</gene>
<name>KIF13_DICDI</name>
<evidence type="ECO:0000250" key="1"/>
<evidence type="ECO:0000255" key="2"/>
<evidence type="ECO:0000255" key="3">
    <source>
        <dbReference type="PROSITE-ProRule" id="PRU00283"/>
    </source>
</evidence>
<evidence type="ECO:0000256" key="4">
    <source>
        <dbReference type="SAM" id="MobiDB-lite"/>
    </source>
</evidence>
<evidence type="ECO:0000269" key="5">
    <source>
    </source>
</evidence>
<organism>
    <name type="scientific">Dictyostelium discoideum</name>
    <name type="common">Social amoeba</name>
    <dbReference type="NCBI Taxonomy" id="44689"/>
    <lineage>
        <taxon>Eukaryota</taxon>
        <taxon>Amoebozoa</taxon>
        <taxon>Evosea</taxon>
        <taxon>Eumycetozoa</taxon>
        <taxon>Dictyostelia</taxon>
        <taxon>Dictyosteliales</taxon>
        <taxon>Dictyosteliaceae</taxon>
        <taxon>Dictyostelium</taxon>
    </lineage>
</organism>
<proteinExistence type="evidence at protein level"/>